<feature type="chain" id="PRO_0000204974" description="DNA repair protein RecO">
    <location>
        <begin position="1"/>
        <end position="263"/>
    </location>
</feature>
<feature type="region of interest" description="Disordered" evidence="1">
    <location>
        <begin position="243"/>
        <end position="263"/>
    </location>
</feature>
<feature type="compositionally biased region" description="Polar residues" evidence="1">
    <location>
        <begin position="252"/>
        <end position="263"/>
    </location>
</feature>
<gene>
    <name type="primary">recO</name>
    <name type="ordered locus">NMA2038</name>
</gene>
<proteinExistence type="inferred from homology"/>
<reference key="1">
    <citation type="journal article" date="2000" name="Mol. Microbiol.">
        <title>Frequent interspecific genetic exchange between commensal Neisseriae and Neisseria meningitidis.</title>
        <authorList>
            <person name="Linz B."/>
            <person name="Schenker M."/>
            <person name="Zhu P."/>
            <person name="Achtman M."/>
        </authorList>
    </citation>
    <scope>NUCLEOTIDE SEQUENCE [GENOMIC DNA]</scope>
    <source>
        <strain>DSM 15465 / Z2491</strain>
    </source>
</reference>
<reference key="2">
    <citation type="journal article" date="2000" name="Nature">
        <title>Complete DNA sequence of a serogroup A strain of Neisseria meningitidis Z2491.</title>
        <authorList>
            <person name="Parkhill J."/>
            <person name="Achtman M."/>
            <person name="James K.D."/>
            <person name="Bentley S.D."/>
            <person name="Churcher C.M."/>
            <person name="Klee S.R."/>
            <person name="Morelli G."/>
            <person name="Basham D."/>
            <person name="Brown D."/>
            <person name="Chillingworth T."/>
            <person name="Davies R.M."/>
            <person name="Davis P."/>
            <person name="Devlin K."/>
            <person name="Feltwell T."/>
            <person name="Hamlin N."/>
            <person name="Holroyd S."/>
            <person name="Jagels K."/>
            <person name="Leather S."/>
            <person name="Moule S."/>
            <person name="Mungall K.L."/>
            <person name="Quail M.A."/>
            <person name="Rajandream M.A."/>
            <person name="Rutherford K.M."/>
            <person name="Simmonds M."/>
            <person name="Skelton J."/>
            <person name="Whitehead S."/>
            <person name="Spratt B.G."/>
            <person name="Barrell B.G."/>
        </authorList>
    </citation>
    <scope>NUCLEOTIDE SEQUENCE [LARGE SCALE GENOMIC DNA]</scope>
    <source>
        <strain>DSM 15465 / Z2491</strain>
    </source>
</reference>
<keyword id="KW-0227">DNA damage</keyword>
<keyword id="KW-0233">DNA recombination</keyword>
<keyword id="KW-0234">DNA repair</keyword>
<evidence type="ECO:0000256" key="1">
    <source>
        <dbReference type="SAM" id="MobiDB-lite"/>
    </source>
</evidence>
<evidence type="ECO:0000305" key="2"/>
<organism>
    <name type="scientific">Neisseria meningitidis serogroup A / serotype 4A (strain DSM 15465 / Z2491)</name>
    <dbReference type="NCBI Taxonomy" id="122587"/>
    <lineage>
        <taxon>Bacteria</taxon>
        <taxon>Pseudomonadati</taxon>
        <taxon>Pseudomonadota</taxon>
        <taxon>Betaproteobacteria</taxon>
        <taxon>Neisseriales</taxon>
        <taxon>Neisseriaceae</taxon>
        <taxon>Neisseria</taxon>
    </lineage>
</organism>
<protein>
    <recommendedName>
        <fullName>DNA repair protein RecO</fullName>
    </recommendedName>
    <alternativeName>
        <fullName>Recombination protein O</fullName>
    </alternativeName>
</protein>
<name>RECO_NEIMA</name>
<accession>Q9JT15</accession>
<accession>A1ITM5</accession>
<accession>Q9RQV8</accession>
<comment type="function">
    <text>Involved in DNA repair and RecF pathway recombination. Involved in pilin antigenic variation.</text>
</comment>
<comment type="similarity">
    <text evidence="2">Belongs to the RecO family.</text>
</comment>
<comment type="sequence caution" evidence="2">
    <conflict type="erroneous initiation">
        <sequence resource="EMBL-CDS" id="CAM09142"/>
    </conflict>
</comment>
<sequence>MSEHRVNHEPVFLLASSPWRESSLRVEAFSRRYGRVALLARSARKRQSELRGVLVPFVLVSASWYGSQELKTLHRAEWIGGWPQPQGRALFSGLYVNELMLKLTVREDPLPELYDALAEVMEAVCCKAAYIDDLRRFEWRLLNLLGVAPDLNRDGDGGTIAAGGTYLVRPETAVFPVGKGFAVPPHAAGVVAPGQSLIDLREGSFRTAESLQQALKITRLFIRHLLPEGLKSRQVLEQIRQFDRKETARETVPTSDGTASNAV</sequence>
<dbReference type="EMBL" id="AF058689">
    <property type="protein sequence ID" value="AAF06689.1"/>
    <property type="molecule type" value="Genomic_DNA"/>
</dbReference>
<dbReference type="EMBL" id="AL157959">
    <property type="protein sequence ID" value="CAM09142.1"/>
    <property type="status" value="ALT_INIT"/>
    <property type="molecule type" value="Genomic_DNA"/>
</dbReference>
<dbReference type="PIR" id="A81834">
    <property type="entry name" value="A81834"/>
</dbReference>
<dbReference type="RefSeq" id="WP_002245908.1">
    <property type="nucleotide sequence ID" value="NC_003116.1"/>
</dbReference>
<dbReference type="SMR" id="Q9JT15"/>
<dbReference type="EnsemblBacteria" id="CAM09142">
    <property type="protein sequence ID" value="CAM09142"/>
    <property type="gene ID" value="NMA2038"/>
</dbReference>
<dbReference type="GeneID" id="93387542"/>
<dbReference type="KEGG" id="nma:NMA2038"/>
<dbReference type="HOGENOM" id="CLU_066645_0_1_4"/>
<dbReference type="Proteomes" id="UP000000626">
    <property type="component" value="Chromosome"/>
</dbReference>
<dbReference type="GO" id="GO:0043590">
    <property type="term" value="C:bacterial nucleoid"/>
    <property type="evidence" value="ECO:0007669"/>
    <property type="project" value="TreeGrafter"/>
</dbReference>
<dbReference type="GO" id="GO:0006310">
    <property type="term" value="P:DNA recombination"/>
    <property type="evidence" value="ECO:0007669"/>
    <property type="project" value="UniProtKB-UniRule"/>
</dbReference>
<dbReference type="GO" id="GO:0006302">
    <property type="term" value="P:double-strand break repair"/>
    <property type="evidence" value="ECO:0007669"/>
    <property type="project" value="TreeGrafter"/>
</dbReference>
<dbReference type="Gene3D" id="2.40.50.140">
    <property type="entry name" value="Nucleic acid-binding proteins"/>
    <property type="match status" value="1"/>
</dbReference>
<dbReference type="Gene3D" id="1.20.1440.120">
    <property type="entry name" value="Recombination protein O, C-terminal domain"/>
    <property type="match status" value="1"/>
</dbReference>
<dbReference type="HAMAP" id="MF_00201">
    <property type="entry name" value="RecO"/>
    <property type="match status" value="1"/>
</dbReference>
<dbReference type="InterPro" id="IPR037278">
    <property type="entry name" value="ARFGAP/RecO"/>
</dbReference>
<dbReference type="InterPro" id="IPR022572">
    <property type="entry name" value="DNA_rep/recomb_RecO_N"/>
</dbReference>
<dbReference type="InterPro" id="IPR012340">
    <property type="entry name" value="NA-bd_OB-fold"/>
</dbReference>
<dbReference type="InterPro" id="IPR003717">
    <property type="entry name" value="RecO"/>
</dbReference>
<dbReference type="InterPro" id="IPR042242">
    <property type="entry name" value="RecO_C"/>
</dbReference>
<dbReference type="NCBIfam" id="TIGR00613">
    <property type="entry name" value="reco"/>
    <property type="match status" value="1"/>
</dbReference>
<dbReference type="PANTHER" id="PTHR33991">
    <property type="entry name" value="DNA REPAIR PROTEIN RECO"/>
    <property type="match status" value="1"/>
</dbReference>
<dbReference type="PANTHER" id="PTHR33991:SF1">
    <property type="entry name" value="DNA REPAIR PROTEIN RECO"/>
    <property type="match status" value="1"/>
</dbReference>
<dbReference type="Pfam" id="PF02565">
    <property type="entry name" value="RecO_C"/>
    <property type="match status" value="1"/>
</dbReference>
<dbReference type="Pfam" id="PF11967">
    <property type="entry name" value="RecO_N"/>
    <property type="match status" value="1"/>
</dbReference>
<dbReference type="SUPFAM" id="SSF57863">
    <property type="entry name" value="ArfGap/RecO-like zinc finger"/>
    <property type="match status" value="1"/>
</dbReference>
<dbReference type="SUPFAM" id="SSF50249">
    <property type="entry name" value="Nucleic acid-binding proteins"/>
    <property type="match status" value="1"/>
</dbReference>